<protein>
    <recommendedName>
        <fullName>Threonine synthase</fullName>
        <shortName>TS</shortName>
        <ecNumber>4.2.3.1</ecNumber>
    </recommendedName>
</protein>
<evidence type="ECO:0000269" key="1">
    <source>
    </source>
</evidence>
<evidence type="ECO:0000305" key="2"/>
<gene>
    <name type="primary">thrC</name>
    <name type="ordered locus">Cgl2220</name>
    <name type="ordered locus">cg2437</name>
</gene>
<proteinExistence type="evidence at protein level"/>
<organism>
    <name type="scientific">Corynebacterium glutamicum (strain ATCC 13032 / DSM 20300 / JCM 1318 / BCRC 11384 / CCUG 27702 / LMG 3730 / NBRC 12168 / NCIMB 10025 / NRRL B-2784 / 534)</name>
    <dbReference type="NCBI Taxonomy" id="196627"/>
    <lineage>
        <taxon>Bacteria</taxon>
        <taxon>Bacillati</taxon>
        <taxon>Actinomycetota</taxon>
        <taxon>Actinomycetes</taxon>
        <taxon>Mycobacteriales</taxon>
        <taxon>Corynebacteriaceae</taxon>
        <taxon>Corynebacterium</taxon>
    </lineage>
</organism>
<name>THRC_CORGL</name>
<dbReference type="EC" id="4.2.3.1"/>
<dbReference type="EMBL" id="X56037">
    <property type="protein sequence ID" value="CAA39510.1"/>
    <property type="molecule type" value="Genomic_DNA"/>
</dbReference>
<dbReference type="EMBL" id="Z29563">
    <property type="protein sequence ID" value="CAA82670.1"/>
    <property type="molecule type" value="Genomic_DNA"/>
</dbReference>
<dbReference type="EMBL" id="BA000036">
    <property type="protein sequence ID" value="BAB99613.1"/>
    <property type="molecule type" value="Genomic_DNA"/>
</dbReference>
<dbReference type="EMBL" id="BX927154">
    <property type="protein sequence ID" value="CAF20560.1"/>
    <property type="molecule type" value="Genomic_DNA"/>
</dbReference>
<dbReference type="PIR" id="S11979">
    <property type="entry name" value="S11979"/>
</dbReference>
<dbReference type="RefSeq" id="NP_601423.1">
    <property type="nucleotide sequence ID" value="NC_003450.3"/>
</dbReference>
<dbReference type="RefSeq" id="WP_011014964.1">
    <property type="nucleotide sequence ID" value="NC_006958.1"/>
</dbReference>
<dbReference type="SMR" id="P23669"/>
<dbReference type="STRING" id="196627.cg2437"/>
<dbReference type="GeneID" id="1020172"/>
<dbReference type="KEGG" id="cgb:cg2437"/>
<dbReference type="KEGG" id="cgl:Cgl2220"/>
<dbReference type="PATRIC" id="fig|196627.13.peg.2157"/>
<dbReference type="eggNOG" id="COG0498">
    <property type="taxonomic scope" value="Bacteria"/>
</dbReference>
<dbReference type="HOGENOM" id="CLU_015170_1_0_11"/>
<dbReference type="OrthoDB" id="9778118at2"/>
<dbReference type="BioCyc" id="CORYNE:G18NG-11812-MONOMER"/>
<dbReference type="UniPathway" id="UPA00050">
    <property type="reaction ID" value="UER00065"/>
</dbReference>
<dbReference type="Proteomes" id="UP000000582">
    <property type="component" value="Chromosome"/>
</dbReference>
<dbReference type="Proteomes" id="UP000001009">
    <property type="component" value="Chromosome"/>
</dbReference>
<dbReference type="GO" id="GO:0030170">
    <property type="term" value="F:pyridoxal phosphate binding"/>
    <property type="evidence" value="ECO:0007669"/>
    <property type="project" value="InterPro"/>
</dbReference>
<dbReference type="GO" id="GO:0004795">
    <property type="term" value="F:threonine synthase activity"/>
    <property type="evidence" value="ECO:0007669"/>
    <property type="project" value="UniProtKB-EC"/>
</dbReference>
<dbReference type="GO" id="GO:0009088">
    <property type="term" value="P:threonine biosynthetic process"/>
    <property type="evidence" value="ECO:0007669"/>
    <property type="project" value="UniProtKB-UniPathway"/>
</dbReference>
<dbReference type="CDD" id="cd01560">
    <property type="entry name" value="Thr-synth_2"/>
    <property type="match status" value="1"/>
</dbReference>
<dbReference type="Gene3D" id="3.40.50.1100">
    <property type="match status" value="2"/>
</dbReference>
<dbReference type="Gene3D" id="3.90.1380.10">
    <property type="entry name" value="Threonine synthase, N-terminal domain"/>
    <property type="match status" value="1"/>
</dbReference>
<dbReference type="InterPro" id="IPR000634">
    <property type="entry name" value="Ser/Thr_deHydtase_PyrdxlP-BS"/>
</dbReference>
<dbReference type="InterPro" id="IPR029144">
    <property type="entry name" value="Thr_synth_N"/>
</dbReference>
<dbReference type="InterPro" id="IPR037158">
    <property type="entry name" value="Thr_synth_N_sf"/>
</dbReference>
<dbReference type="InterPro" id="IPR004450">
    <property type="entry name" value="Thr_synthase-like"/>
</dbReference>
<dbReference type="InterPro" id="IPR051166">
    <property type="entry name" value="Threonine_Synthase"/>
</dbReference>
<dbReference type="InterPro" id="IPR001926">
    <property type="entry name" value="TrpB-like_PALP"/>
</dbReference>
<dbReference type="InterPro" id="IPR036052">
    <property type="entry name" value="TrpB-like_PALP_sf"/>
</dbReference>
<dbReference type="NCBIfam" id="TIGR00260">
    <property type="entry name" value="thrC"/>
    <property type="match status" value="1"/>
</dbReference>
<dbReference type="PANTHER" id="PTHR42690">
    <property type="entry name" value="THREONINE SYNTHASE FAMILY MEMBER"/>
    <property type="match status" value="1"/>
</dbReference>
<dbReference type="PANTHER" id="PTHR42690:SF1">
    <property type="entry name" value="THREONINE SYNTHASE-LIKE 2"/>
    <property type="match status" value="1"/>
</dbReference>
<dbReference type="Pfam" id="PF00291">
    <property type="entry name" value="PALP"/>
    <property type="match status" value="1"/>
</dbReference>
<dbReference type="Pfam" id="PF14821">
    <property type="entry name" value="Thr_synth_N"/>
    <property type="match status" value="1"/>
</dbReference>
<dbReference type="SUPFAM" id="SSF53686">
    <property type="entry name" value="Tryptophan synthase beta subunit-like PLP-dependent enzymes"/>
    <property type="match status" value="1"/>
</dbReference>
<dbReference type="PROSITE" id="PS00165">
    <property type="entry name" value="DEHYDRATASE_SER_THR"/>
    <property type="match status" value="1"/>
</dbReference>
<reference key="1">
    <citation type="journal article" date="1990" name="Mol. Microbiol.">
        <title>The molecular structure of the Corynebacterium glutamicum threonine synthase gene.</title>
        <authorList>
            <person name="Han K.S."/>
            <person name="Archer J.A.C."/>
            <person name="Sinskey A.J."/>
        </authorList>
    </citation>
    <scope>NUCLEOTIDE SEQUENCE [GENOMIC DNA]</scope>
</reference>
<reference key="2">
    <citation type="journal article" date="1994" name="Appl. Environ. Microbiol.">
        <title>Analysis and expression of the thrC gene of Brevibacterium lactofermentum and characterization of the encoded threonine synthase.</title>
        <authorList>
            <person name="Malumbres M."/>
            <person name="Mateos L.M."/>
            <person name="Lumbreras M.A."/>
            <person name="Guerrero C."/>
            <person name="Martin J.F."/>
        </authorList>
    </citation>
    <scope>NUCLEOTIDE SEQUENCE [GENOMIC DNA]</scope>
    <scope>FUNCTION</scope>
    <scope>CATALYTIC ACTIVITY</scope>
    <scope>COFACTOR</scope>
    <scope>SUBUNIT</scope>
    <source>
        <strain>ATCC 13869 / DSMZ 1412 / NCIMB 9567</strain>
    </source>
</reference>
<reference key="3">
    <citation type="journal article" date="2003" name="Appl. Microbiol. Biotechnol.">
        <title>The Corynebacterium glutamicum genome: features and impacts on biotechnological processes.</title>
        <authorList>
            <person name="Ikeda M."/>
            <person name="Nakagawa S."/>
        </authorList>
    </citation>
    <scope>NUCLEOTIDE SEQUENCE [LARGE SCALE GENOMIC DNA]</scope>
    <source>
        <strain>ATCC 13032 / DSM 20300 / JCM 1318 / BCRC 11384 / CCUG 27702 / LMG 3730 / NBRC 12168 / NCIMB 10025 / NRRL B-2784 / 534</strain>
    </source>
</reference>
<reference key="4">
    <citation type="journal article" date="2003" name="J. Biotechnol.">
        <title>The complete Corynebacterium glutamicum ATCC 13032 genome sequence and its impact on the production of L-aspartate-derived amino acids and vitamins.</title>
        <authorList>
            <person name="Kalinowski J."/>
            <person name="Bathe B."/>
            <person name="Bartels D."/>
            <person name="Bischoff N."/>
            <person name="Bott M."/>
            <person name="Burkovski A."/>
            <person name="Dusch N."/>
            <person name="Eggeling L."/>
            <person name="Eikmanns B.J."/>
            <person name="Gaigalat L."/>
            <person name="Goesmann A."/>
            <person name="Hartmann M."/>
            <person name="Huthmacher K."/>
            <person name="Kraemer R."/>
            <person name="Linke B."/>
            <person name="McHardy A.C."/>
            <person name="Meyer F."/>
            <person name="Moeckel B."/>
            <person name="Pfefferle W."/>
            <person name="Puehler A."/>
            <person name="Rey D.A."/>
            <person name="Rueckert C."/>
            <person name="Rupp O."/>
            <person name="Sahm H."/>
            <person name="Wendisch V.F."/>
            <person name="Wiegraebe I."/>
            <person name="Tauch A."/>
        </authorList>
    </citation>
    <scope>NUCLEOTIDE SEQUENCE [LARGE SCALE GENOMIC DNA]</scope>
    <source>
        <strain>ATCC 13032 / DSM 20300 / JCM 1318 / BCRC 11384 / CCUG 27702 / LMG 3730 / NBRC 12168 / NCIMB 10025 / NRRL B-2784 / 534</strain>
    </source>
</reference>
<keyword id="KW-0028">Amino-acid biosynthesis</keyword>
<keyword id="KW-0456">Lyase</keyword>
<keyword id="KW-0663">Pyridoxal phosphate</keyword>
<keyword id="KW-1185">Reference proteome</keyword>
<keyword id="KW-0791">Threonine biosynthesis</keyword>
<comment type="function">
    <text evidence="1">Catalyzes the gamma-elimination of phosphate from L-phosphohomoserine and the beta-addition of water to produce L-threonine.</text>
</comment>
<comment type="catalytic activity">
    <reaction evidence="1">
        <text>O-phospho-L-homoserine + H2O = L-threonine + phosphate</text>
        <dbReference type="Rhea" id="RHEA:10840"/>
        <dbReference type="ChEBI" id="CHEBI:15377"/>
        <dbReference type="ChEBI" id="CHEBI:43474"/>
        <dbReference type="ChEBI" id="CHEBI:57590"/>
        <dbReference type="ChEBI" id="CHEBI:57926"/>
        <dbReference type="EC" id="4.2.3.1"/>
    </reaction>
</comment>
<comment type="cofactor">
    <cofactor evidence="1">
        <name>pyridoxal 5'-phosphate</name>
        <dbReference type="ChEBI" id="CHEBI:597326"/>
    </cofactor>
</comment>
<comment type="pathway">
    <text>Amino-acid biosynthesis; L-threonine biosynthesis; L-threonine from L-aspartate: step 5/5.</text>
</comment>
<comment type="subunit">
    <text evidence="1">Monomer.</text>
</comment>
<comment type="similarity">
    <text evidence="2">Belongs to the threonine synthase family.</text>
</comment>
<feature type="chain" id="PRO_0000185630" description="Threonine synthase">
    <location>
        <begin position="1"/>
        <end position="481"/>
    </location>
</feature>
<feature type="modified residue" description="N6-(pyridoxal phosphate)lysine" evidence="2">
    <location>
        <position position="118"/>
    </location>
</feature>
<feature type="sequence conflict" description="In Ref. 1; CAA39510." evidence="2" ref="1">
    <original>A</original>
    <variation>R</variation>
    <location>
        <position position="61"/>
    </location>
</feature>
<feature type="sequence conflict" description="In Ref. 2; CAA82670." evidence="2" ref="2">
    <original>R</original>
    <variation>A</variation>
    <location>
        <position position="159"/>
    </location>
</feature>
<feature type="sequence conflict" description="In Ref. 2; CAA82670." evidence="2" ref="2">
    <original>V</original>
    <variation>S</variation>
    <location>
        <position position="404"/>
    </location>
</feature>
<accession>P23669</accession>
<accession>Q59211</accession>
<sequence>MDYISTRDASRTPARFSDILLGGLAPDGGLYLPATYPQLDDAQLSKWREVLANEGYAALAAEVISLFVDDIPVEDIKAITARAYTYPKFNSEDIVPVTELEDNIYLGHLSEGPTAAFKDMAMQLLGELFEYELRRRNETINILGATSGDTGSSAEYAMRGREGIRVFMLTPAGRMTPFQQAQMFGLDDPNIFNIALDGVFDDCQDVVKAVSADAEFKKDNRIGAVNSINWARLMAQVVYYVSSWIRTTTSNDQKVSFSVPTGNFGDICAGHIARQMGLPIDRLIVATNENDVLDEFFRTGDYRVRSSADTHETSSPSMDISRASNFERFIFDLLGRDATRVNDLFGTQVRQGGFSLADDANFEKAAAEYGFASGRSTHADRVATIADVHSRLDVLIDPHTADGVHVARQWRDEVNTPIIVLETALPVKFADTIVEAIGEAPQTPERFAAIMDAPFKVSDLPNDTDAVKQYIVDAIANTSVK</sequence>